<organism>
    <name type="scientific">Brucella abortus (strain S19)</name>
    <dbReference type="NCBI Taxonomy" id="430066"/>
    <lineage>
        <taxon>Bacteria</taxon>
        <taxon>Pseudomonadati</taxon>
        <taxon>Pseudomonadota</taxon>
        <taxon>Alphaproteobacteria</taxon>
        <taxon>Hyphomicrobiales</taxon>
        <taxon>Brucellaceae</taxon>
        <taxon>Brucella/Ochrobactrum group</taxon>
        <taxon>Brucella</taxon>
    </lineage>
</organism>
<gene>
    <name type="ordered locus">BAbS19_I16820</name>
</gene>
<keyword id="KW-0413">Isomerase</keyword>
<proteinExistence type="inferred from homology"/>
<feature type="chain" id="PRO_0000354025" description="4-hydroxyproline epimerase">
    <location>
        <begin position="1"/>
        <end position="333"/>
    </location>
</feature>
<feature type="active site" description="Proton acceptor" evidence="2">
    <location>
        <position position="90"/>
    </location>
</feature>
<feature type="active site" description="Proton donor" evidence="2">
    <location>
        <position position="253"/>
    </location>
</feature>
<feature type="binding site" evidence="2">
    <location>
        <begin position="91"/>
        <end position="92"/>
    </location>
    <ligand>
        <name>substrate</name>
    </ligand>
</feature>
<feature type="binding site" evidence="2">
    <location>
        <position position="249"/>
    </location>
    <ligand>
        <name>substrate</name>
    </ligand>
</feature>
<feature type="binding site" evidence="2">
    <location>
        <begin position="254"/>
        <end position="255"/>
    </location>
    <ligand>
        <name>substrate</name>
    </ligand>
</feature>
<accession>B2S7L7</accession>
<comment type="function">
    <text evidence="1">Allows intracellular utilization of 4-hydroxyproline, one of the major constituents of host collagen, by converting 4-hydroxy-L-proline to 4-hydroxy-D-proline, which can be further metabolized by intracellular 4-hydroxy-D-proline oxidases. Strong B-cell mitogen. Plays an important role in the regulation of intra- and extracellular amino acid pools, allowing the bacterium to profit from host precursors and enzymatic pathways (By similarity).</text>
</comment>
<comment type="catalytic activity">
    <reaction>
        <text>trans-4-hydroxy-L-proline = cis-4-hydroxy-D-proline</text>
        <dbReference type="Rhea" id="RHEA:21152"/>
        <dbReference type="ChEBI" id="CHEBI:57690"/>
        <dbReference type="ChEBI" id="CHEBI:58375"/>
        <dbReference type="EC" id="5.1.1.8"/>
    </reaction>
</comment>
<comment type="subunit">
    <text evidence="1">Homodimer.</text>
</comment>
<comment type="similarity">
    <text evidence="3">Belongs to the proline racemase family.</text>
</comment>
<evidence type="ECO:0000250" key="1"/>
<evidence type="ECO:0000250" key="2">
    <source>
        <dbReference type="UniProtKB" id="Q4KGU2"/>
    </source>
</evidence>
<evidence type="ECO:0000305" key="3"/>
<sequence length="333" mass="36670">MARHSFFCVDGHTCGNPVRLVAGGGPNLNGSTMMEKRAHFLAEYDWIRTGLMFEPRGHDMMSGSILYPPTRPDCDVAVLFIETSGCLPMCGHGTIGTVTMAIEQGLVTPKTPGKLNLDTPAGLVAIEYEQDGQYVERVRLTNVPAFLYAEGLEVECPDLGPIKVDVAYGGNFYAIVEPQENYTDMDDYSALQLIAWSPVLRQRLNEKYKFQHPELPDINRLSHILWTGKPKHPQAHARNAVFYGDKAIDRSPCGTGTSARMAQLAAKGKLKPCDEFIHESIIGSLFHGRVERAAEVAGRPAIVPSIAGWARMTGYNTIFIDDRDPFAHGFSMA</sequence>
<protein>
    <recommendedName>
        <fullName>4-hydroxyproline epimerase</fullName>
        <ecNumber>5.1.1.8</ecNumber>
    </recommendedName>
    <alternativeName>
        <fullName>Hydroxyproline-2-epimerase</fullName>
        <shortName>HyPRE</shortName>
    </alternativeName>
</protein>
<reference key="1">
    <citation type="journal article" date="2008" name="PLoS ONE">
        <title>Genome sequence of Brucella abortus vaccine strain S19 compared to virulent strains yields candidate virulence genes.</title>
        <authorList>
            <person name="Crasta O.R."/>
            <person name="Folkerts O."/>
            <person name="Fei Z."/>
            <person name="Mane S.P."/>
            <person name="Evans C."/>
            <person name="Martino-Catt S."/>
            <person name="Bricker B."/>
            <person name="Yu G."/>
            <person name="Du L."/>
            <person name="Sobral B.W."/>
        </authorList>
    </citation>
    <scope>NUCLEOTIDE SEQUENCE [LARGE SCALE GENOMIC DNA]</scope>
    <source>
        <strain>S19</strain>
    </source>
</reference>
<dbReference type="EC" id="5.1.1.8"/>
<dbReference type="EMBL" id="CP000887">
    <property type="protein sequence ID" value="ACD73164.1"/>
    <property type="molecule type" value="Genomic_DNA"/>
</dbReference>
<dbReference type="RefSeq" id="WP_002964871.1">
    <property type="nucleotide sequence ID" value="NC_010742.1"/>
</dbReference>
<dbReference type="SMR" id="B2S7L7"/>
<dbReference type="KEGG" id="bmc:BAbS19_I16820"/>
<dbReference type="HOGENOM" id="CLU_036729_0_0_5"/>
<dbReference type="Proteomes" id="UP000002565">
    <property type="component" value="Chromosome 1"/>
</dbReference>
<dbReference type="GO" id="GO:0047580">
    <property type="term" value="F:4-hydroxyproline epimerase activity"/>
    <property type="evidence" value="ECO:0007669"/>
    <property type="project" value="UniProtKB-EC"/>
</dbReference>
<dbReference type="FunFam" id="3.10.310.10:FF:000005">
    <property type="entry name" value="Proline racemase"/>
    <property type="match status" value="1"/>
</dbReference>
<dbReference type="Gene3D" id="3.10.310.10">
    <property type="entry name" value="Diaminopimelate Epimerase, Chain A, domain 1"/>
    <property type="match status" value="2"/>
</dbReference>
<dbReference type="InterPro" id="IPR008794">
    <property type="entry name" value="Pro_racemase_fam"/>
</dbReference>
<dbReference type="NCBIfam" id="NF010578">
    <property type="entry name" value="PRK13971.1"/>
    <property type="match status" value="1"/>
</dbReference>
<dbReference type="PANTHER" id="PTHR33442">
    <property type="entry name" value="TRANS-3-HYDROXY-L-PROLINE DEHYDRATASE"/>
    <property type="match status" value="1"/>
</dbReference>
<dbReference type="PANTHER" id="PTHR33442:SF1">
    <property type="entry name" value="TRANS-3-HYDROXY-L-PROLINE DEHYDRATASE"/>
    <property type="match status" value="1"/>
</dbReference>
<dbReference type="Pfam" id="PF05544">
    <property type="entry name" value="Pro_racemase"/>
    <property type="match status" value="1"/>
</dbReference>
<dbReference type="PIRSF" id="PIRSF029792">
    <property type="entry name" value="Pro_racemase"/>
    <property type="match status" value="1"/>
</dbReference>
<dbReference type="SFLD" id="SFLDS00028">
    <property type="entry name" value="Proline_Racemase"/>
    <property type="match status" value="1"/>
</dbReference>
<dbReference type="SUPFAM" id="SSF54506">
    <property type="entry name" value="Diaminopimelate epimerase-like"/>
    <property type="match status" value="1"/>
</dbReference>
<name>4HYPE_BRUA1</name>